<dbReference type="EMBL" id="U00096">
    <property type="protein sequence ID" value="AAC74758.1"/>
    <property type="molecule type" value="Genomic_DNA"/>
</dbReference>
<dbReference type="EMBL" id="AP009048">
    <property type="protein sequence ID" value="BAA15450.1"/>
    <property type="molecule type" value="Genomic_DNA"/>
</dbReference>
<dbReference type="PIR" id="H64926">
    <property type="entry name" value="H64926"/>
</dbReference>
<dbReference type="RefSeq" id="NP_416203.1">
    <property type="nucleotide sequence ID" value="NC_000913.3"/>
</dbReference>
<dbReference type="RefSeq" id="WP_000248636.1">
    <property type="nucleotide sequence ID" value="NZ_STEB01000003.1"/>
</dbReference>
<dbReference type="PDB" id="7OT9">
    <property type="method" value="EM"/>
    <property type="resolution" value="2.80 A"/>
    <property type="chains" value="A/B/C/D/E=1-370"/>
</dbReference>
<dbReference type="PDBsum" id="7OT9"/>
<dbReference type="EMDB" id="EMD-13057"/>
<dbReference type="SMR" id="P0AFS7"/>
<dbReference type="BioGRID" id="4259460">
    <property type="interactions" value="17"/>
</dbReference>
<dbReference type="FunCoup" id="P0AFS7">
    <property type="interactions" value="172"/>
</dbReference>
<dbReference type="STRING" id="511145.b1688"/>
<dbReference type="jPOST" id="P0AFS7"/>
<dbReference type="PaxDb" id="511145-b1688"/>
<dbReference type="DNASU" id="946183"/>
<dbReference type="EnsemblBacteria" id="AAC74758">
    <property type="protein sequence ID" value="AAC74758"/>
    <property type="gene ID" value="b1688"/>
</dbReference>
<dbReference type="GeneID" id="75204534"/>
<dbReference type="GeneID" id="946183"/>
<dbReference type="KEGG" id="ecj:JW1678"/>
<dbReference type="KEGG" id="eco:b1688"/>
<dbReference type="KEGG" id="ecoc:C3026_09665"/>
<dbReference type="PATRIC" id="fig|1411691.4.peg.570"/>
<dbReference type="EchoBASE" id="EB3727"/>
<dbReference type="eggNOG" id="COG0628">
    <property type="taxonomic scope" value="Bacteria"/>
</dbReference>
<dbReference type="HOGENOM" id="CLU_041771_1_1_6"/>
<dbReference type="InParanoid" id="P0AFS7"/>
<dbReference type="OMA" id="PLFEGWM"/>
<dbReference type="OrthoDB" id="5298283at2"/>
<dbReference type="PhylomeDB" id="P0AFS7"/>
<dbReference type="BioCyc" id="EcoCyc:G6914-MONOMER"/>
<dbReference type="PRO" id="PR:P0AFS7"/>
<dbReference type="Proteomes" id="UP000000625">
    <property type="component" value="Chromosome"/>
</dbReference>
<dbReference type="GO" id="GO:0005886">
    <property type="term" value="C:plasma membrane"/>
    <property type="evidence" value="ECO:0000314"/>
    <property type="project" value="EcoCyc"/>
</dbReference>
<dbReference type="InterPro" id="IPR002549">
    <property type="entry name" value="AI-2E-like"/>
</dbReference>
<dbReference type="NCBIfam" id="NF008216">
    <property type="entry name" value="PRK10983.1"/>
    <property type="match status" value="1"/>
</dbReference>
<dbReference type="PANTHER" id="PTHR21716">
    <property type="entry name" value="TRANSMEMBRANE PROTEIN"/>
    <property type="match status" value="1"/>
</dbReference>
<dbReference type="PANTHER" id="PTHR21716:SF67">
    <property type="entry name" value="TRANSPORT PROTEIN YDIK-RELATED"/>
    <property type="match status" value="1"/>
</dbReference>
<dbReference type="Pfam" id="PF01594">
    <property type="entry name" value="AI-2E_transport"/>
    <property type="match status" value="1"/>
</dbReference>
<reference key="1">
    <citation type="journal article" date="1996" name="DNA Res.">
        <title>A 570-kb DNA sequence of the Escherichia coli K-12 genome corresponding to the 28.0-40.1 min region on the linkage map.</title>
        <authorList>
            <person name="Aiba H."/>
            <person name="Baba T."/>
            <person name="Fujita K."/>
            <person name="Hayashi K."/>
            <person name="Inada T."/>
            <person name="Isono K."/>
            <person name="Itoh T."/>
            <person name="Kasai H."/>
            <person name="Kashimoto K."/>
            <person name="Kimura S."/>
            <person name="Kitakawa M."/>
            <person name="Kitagawa M."/>
            <person name="Makino K."/>
            <person name="Miki T."/>
            <person name="Mizobuchi K."/>
            <person name="Mori H."/>
            <person name="Mori T."/>
            <person name="Motomura K."/>
            <person name="Nakade S."/>
            <person name="Nakamura Y."/>
            <person name="Nashimoto H."/>
            <person name="Nishio Y."/>
            <person name="Oshima T."/>
            <person name="Saito N."/>
            <person name="Sampei G."/>
            <person name="Seki Y."/>
            <person name="Sivasundaram S."/>
            <person name="Tagami H."/>
            <person name="Takeda J."/>
            <person name="Takemoto K."/>
            <person name="Takeuchi Y."/>
            <person name="Wada C."/>
            <person name="Yamamoto Y."/>
            <person name="Horiuchi T."/>
        </authorList>
    </citation>
    <scope>NUCLEOTIDE SEQUENCE [LARGE SCALE GENOMIC DNA]</scope>
    <source>
        <strain>K12 / W3110 / ATCC 27325 / DSM 5911</strain>
    </source>
</reference>
<reference key="2">
    <citation type="journal article" date="1997" name="Science">
        <title>The complete genome sequence of Escherichia coli K-12.</title>
        <authorList>
            <person name="Blattner F.R."/>
            <person name="Plunkett G. III"/>
            <person name="Bloch C.A."/>
            <person name="Perna N.T."/>
            <person name="Burland V."/>
            <person name="Riley M."/>
            <person name="Collado-Vides J."/>
            <person name="Glasner J.D."/>
            <person name="Rode C.K."/>
            <person name="Mayhew G.F."/>
            <person name="Gregor J."/>
            <person name="Davis N.W."/>
            <person name="Kirkpatrick H.A."/>
            <person name="Goeden M.A."/>
            <person name="Rose D.J."/>
            <person name="Mau B."/>
            <person name="Shao Y."/>
        </authorList>
    </citation>
    <scope>NUCLEOTIDE SEQUENCE [LARGE SCALE GENOMIC DNA]</scope>
    <source>
        <strain>K12 / MG1655 / ATCC 47076</strain>
    </source>
</reference>
<reference key="3">
    <citation type="journal article" date="2006" name="Mol. Syst. Biol.">
        <title>Highly accurate genome sequences of Escherichia coli K-12 strains MG1655 and W3110.</title>
        <authorList>
            <person name="Hayashi K."/>
            <person name="Morooka N."/>
            <person name="Yamamoto Y."/>
            <person name="Fujita K."/>
            <person name="Isono K."/>
            <person name="Choi S."/>
            <person name="Ohtsubo E."/>
            <person name="Baba T."/>
            <person name="Wanner B.L."/>
            <person name="Mori H."/>
            <person name="Horiuchi T."/>
        </authorList>
    </citation>
    <scope>NUCLEOTIDE SEQUENCE [LARGE SCALE GENOMIC DNA]</scope>
    <source>
        <strain>K12 / W3110 / ATCC 27325 / DSM 5911</strain>
    </source>
</reference>
<reference key="4">
    <citation type="journal article" date="2005" name="Science">
        <title>Global topology analysis of the Escherichia coli inner membrane proteome.</title>
        <authorList>
            <person name="Daley D.O."/>
            <person name="Rapp M."/>
            <person name="Granseth E."/>
            <person name="Melen K."/>
            <person name="Drew D."/>
            <person name="von Heijne G."/>
        </authorList>
    </citation>
    <scope>TOPOLOGY [LARGE SCALE ANALYSIS]</scope>
    <scope>SUBCELLULAR LOCATION</scope>
    <source>
        <strain>K12 / MG1655 / ATCC 47076</strain>
    </source>
</reference>
<proteinExistence type="evidence at protein level"/>
<keyword id="KW-0002">3D-structure</keyword>
<keyword id="KW-0997">Cell inner membrane</keyword>
<keyword id="KW-1003">Cell membrane</keyword>
<keyword id="KW-0472">Membrane</keyword>
<keyword id="KW-1185">Reference proteome</keyword>
<keyword id="KW-0812">Transmembrane</keyword>
<keyword id="KW-1133">Transmembrane helix</keyword>
<keyword id="KW-0813">Transport</keyword>
<gene>
    <name type="primary">ydiK</name>
    <name type="ordered locus">b1688</name>
    <name type="ordered locus">JW1678</name>
</gene>
<organism>
    <name type="scientific">Escherichia coli (strain K12)</name>
    <dbReference type="NCBI Taxonomy" id="83333"/>
    <lineage>
        <taxon>Bacteria</taxon>
        <taxon>Pseudomonadati</taxon>
        <taxon>Pseudomonadota</taxon>
        <taxon>Gammaproteobacteria</taxon>
        <taxon>Enterobacterales</taxon>
        <taxon>Enterobacteriaceae</taxon>
        <taxon>Escherichia</taxon>
    </lineage>
</organism>
<accession>P0AFS7</accession>
<accession>P77175</accession>
<protein>
    <recommendedName>
        <fullName>Putative transport protein YdiK</fullName>
    </recommendedName>
</protein>
<name>YDIK_ECOLI</name>
<comment type="subcellular location">
    <subcellularLocation>
        <location evidence="2">Cell inner membrane</location>
        <topology evidence="1">Multi-pass membrane protein</topology>
    </subcellularLocation>
</comment>
<comment type="similarity">
    <text evidence="3">Belongs to the autoinducer-2 exporter (AI-2E) (TC 2.A.86) family.</text>
</comment>
<evidence type="ECO:0000255" key="1"/>
<evidence type="ECO:0000269" key="2">
    <source>
    </source>
</evidence>
<evidence type="ECO:0000305" key="3"/>
<evidence type="ECO:0007829" key="4">
    <source>
        <dbReference type="PDB" id="7OT9"/>
    </source>
</evidence>
<sequence>MVNVRQPRDVAQILLSVLFLAIMIVACLWIVQPFILGFAWAGTVVIATWPVLLRLQKIMFGRRSLAVLVMTLLLVMVFIIPIALLVNSIVDGSGPLIKAISSGDMTLPDLAWLNTIPVIGAKLYAGWHNLLDMGGTAIMAKVRPYIGTTTTWFVGQAAHIGRFMVHCALMLLFSALLYWRGEQVAQGIRHFATRLAGVRGDAAVLLAAQAIRAVALGVVVTALVQAVLGGIGLAVSGVPYATLLTVLMILSCLVQLGPLPVLIPAIIWLYWTGDTTWGTVLLVWSGVVGTLDNVIRPMLIRMGADLPLILILSGVIGGLIAFGMIGLFIGPVLLAVSWRLFAAWVEEVPPPTDQPEEILEELGEIEKPNK</sequence>
<feature type="chain" id="PRO_0000148299" description="Putative transport protein YdiK">
    <location>
        <begin position="1"/>
        <end position="370"/>
    </location>
</feature>
<feature type="topological domain" description="Periplasmic" evidence="1">
    <location>
        <begin position="1"/>
        <end position="17"/>
    </location>
</feature>
<feature type="transmembrane region" description="Helical" evidence="1">
    <location>
        <begin position="18"/>
        <end position="38"/>
    </location>
</feature>
<feature type="topological domain" description="Cytoplasmic" evidence="1">
    <location>
        <position position="39"/>
    </location>
</feature>
<feature type="transmembrane region" description="Helical" evidence="1">
    <location>
        <begin position="40"/>
        <end position="60"/>
    </location>
</feature>
<feature type="topological domain" description="Periplasmic" evidence="1">
    <location>
        <begin position="61"/>
        <end position="65"/>
    </location>
</feature>
<feature type="transmembrane region" description="Helical" evidence="1">
    <location>
        <begin position="66"/>
        <end position="86"/>
    </location>
</feature>
<feature type="topological domain" description="Cytoplasmic" evidence="1">
    <location>
        <begin position="87"/>
        <end position="106"/>
    </location>
</feature>
<feature type="transmembrane region" description="Helical" evidence="1">
    <location>
        <begin position="107"/>
        <end position="127"/>
    </location>
</feature>
<feature type="topological domain" description="Periplasmic" evidence="1">
    <location>
        <begin position="128"/>
        <end position="156"/>
    </location>
</feature>
<feature type="transmembrane region" description="Helical" evidence="1">
    <location>
        <begin position="157"/>
        <end position="177"/>
    </location>
</feature>
<feature type="topological domain" description="Cytoplasmic" evidence="1">
    <location>
        <begin position="178"/>
        <end position="213"/>
    </location>
</feature>
<feature type="transmembrane region" description="Helical" evidence="1">
    <location>
        <begin position="214"/>
        <end position="234"/>
    </location>
</feature>
<feature type="topological domain" description="Periplasmic" evidence="1">
    <location>
        <begin position="235"/>
        <end position="248"/>
    </location>
</feature>
<feature type="transmembrane region" description="Helical" evidence="1">
    <location>
        <begin position="249"/>
        <end position="269"/>
    </location>
</feature>
<feature type="topological domain" description="Cytoplasmic" evidence="1">
    <location>
        <begin position="270"/>
        <end position="274"/>
    </location>
</feature>
<feature type="transmembrane region" description="Helical" evidence="1">
    <location>
        <begin position="275"/>
        <end position="295"/>
    </location>
</feature>
<feature type="topological domain" description="Periplasmic" evidence="1">
    <location>
        <begin position="296"/>
        <end position="308"/>
    </location>
</feature>
<feature type="transmembrane region" description="Helical" evidence="1">
    <location>
        <begin position="309"/>
        <end position="329"/>
    </location>
</feature>
<feature type="topological domain" description="Cytoplasmic" evidence="1">
    <location>
        <begin position="330"/>
        <end position="370"/>
    </location>
</feature>
<feature type="helix" evidence="4">
    <location>
        <begin position="10"/>
        <end position="47"/>
    </location>
</feature>
<feature type="helix" evidence="4">
    <location>
        <begin position="49"/>
        <end position="58"/>
    </location>
</feature>
<feature type="turn" evidence="4">
    <location>
        <begin position="59"/>
        <end position="61"/>
    </location>
</feature>
<feature type="helix" evidence="4">
    <location>
        <begin position="63"/>
        <end position="78"/>
    </location>
</feature>
<feature type="turn" evidence="4">
    <location>
        <begin position="165"/>
        <end position="167"/>
    </location>
</feature>
<feature type="helix" evidence="4">
    <location>
        <begin position="168"/>
        <end position="179"/>
    </location>
</feature>
<feature type="helix" evidence="4">
    <location>
        <begin position="181"/>
        <end position="195"/>
    </location>
</feature>
<feature type="strand" evidence="4">
    <location>
        <begin position="196"/>
        <end position="198"/>
    </location>
</feature>
<feature type="helix" evidence="4">
    <location>
        <begin position="199"/>
        <end position="229"/>
    </location>
</feature>
<feature type="helix" evidence="4">
    <location>
        <begin position="277"/>
        <end position="288"/>
    </location>
</feature>
<feature type="strand" evidence="4">
    <location>
        <begin position="292"/>
        <end position="296"/>
    </location>
</feature>
<feature type="turn" evidence="4">
    <location>
        <begin position="297"/>
        <end position="299"/>
    </location>
</feature>
<feature type="helix" evidence="4">
    <location>
        <begin position="303"/>
        <end position="305"/>
    </location>
</feature>
<feature type="helix" evidence="4">
    <location>
        <begin position="308"/>
        <end position="321"/>
    </location>
</feature>
<feature type="helix" evidence="4">
    <location>
        <begin position="326"/>
        <end position="345"/>
    </location>
</feature>